<proteinExistence type="evidence at protein level"/>
<protein>
    <recommendedName>
        <fullName evidence="5">Bacterioferritin BfrB</fullName>
    </recommendedName>
</protein>
<keyword id="KW-0963">Cytoplasm</keyword>
<keyword id="KW-0349">Heme</keyword>
<keyword id="KW-0408">Iron</keyword>
<keyword id="KW-0409">Iron storage</keyword>
<keyword id="KW-0479">Metal-binding</keyword>
<keyword id="KW-1185">Reference proteome</keyword>
<dbReference type="EMBL" id="BA000022">
    <property type="protein sequence ID" value="BAA17315.1"/>
    <property type="status" value="ALT_INIT"/>
    <property type="molecule type" value="Genomic_DNA"/>
</dbReference>
<dbReference type="PIR" id="S77468">
    <property type="entry name" value="S77468"/>
</dbReference>
<dbReference type="SMR" id="P73287"/>
<dbReference type="IntAct" id="P73287">
    <property type="interactions" value="1"/>
</dbReference>
<dbReference type="STRING" id="1148.gene:10498178"/>
<dbReference type="PaxDb" id="1148-1652393"/>
<dbReference type="EnsemblBacteria" id="BAA17315">
    <property type="protein sequence ID" value="BAA17315"/>
    <property type="gene ID" value="BAA17315"/>
</dbReference>
<dbReference type="KEGG" id="syn:slr1890"/>
<dbReference type="eggNOG" id="COG2193">
    <property type="taxonomic scope" value="Bacteria"/>
</dbReference>
<dbReference type="InParanoid" id="P73287"/>
<dbReference type="PhylomeDB" id="P73287"/>
<dbReference type="Proteomes" id="UP000001425">
    <property type="component" value="Chromosome"/>
</dbReference>
<dbReference type="GO" id="GO:0005829">
    <property type="term" value="C:cytosol"/>
    <property type="evidence" value="ECO:0000318"/>
    <property type="project" value="GO_Central"/>
</dbReference>
<dbReference type="GO" id="GO:0008199">
    <property type="term" value="F:ferric iron binding"/>
    <property type="evidence" value="ECO:0007669"/>
    <property type="project" value="InterPro"/>
</dbReference>
<dbReference type="GO" id="GO:0004322">
    <property type="term" value="F:ferroxidase activity"/>
    <property type="evidence" value="ECO:0000318"/>
    <property type="project" value="GO_Central"/>
</dbReference>
<dbReference type="GO" id="GO:0020037">
    <property type="term" value="F:heme binding"/>
    <property type="evidence" value="ECO:0000318"/>
    <property type="project" value="GO_Central"/>
</dbReference>
<dbReference type="GO" id="GO:0005506">
    <property type="term" value="F:iron ion binding"/>
    <property type="evidence" value="ECO:0000318"/>
    <property type="project" value="GO_Central"/>
</dbReference>
<dbReference type="GO" id="GO:0006879">
    <property type="term" value="P:intracellular iron ion homeostasis"/>
    <property type="evidence" value="ECO:0007669"/>
    <property type="project" value="UniProtKB-KW"/>
</dbReference>
<dbReference type="GO" id="GO:0006826">
    <property type="term" value="P:iron ion transport"/>
    <property type="evidence" value="ECO:0007669"/>
    <property type="project" value="InterPro"/>
</dbReference>
<dbReference type="CDD" id="cd00907">
    <property type="entry name" value="Bacterioferritin"/>
    <property type="match status" value="1"/>
</dbReference>
<dbReference type="Gene3D" id="1.20.1260.10">
    <property type="match status" value="1"/>
</dbReference>
<dbReference type="InterPro" id="IPR002024">
    <property type="entry name" value="Bacterioferritin"/>
</dbReference>
<dbReference type="InterPro" id="IPR012347">
    <property type="entry name" value="Ferritin-like"/>
</dbReference>
<dbReference type="InterPro" id="IPR009040">
    <property type="entry name" value="Ferritin-like_diiron"/>
</dbReference>
<dbReference type="InterPro" id="IPR009078">
    <property type="entry name" value="Ferritin-like_SF"/>
</dbReference>
<dbReference type="InterPro" id="IPR008331">
    <property type="entry name" value="Ferritin_DPS_dom"/>
</dbReference>
<dbReference type="NCBIfam" id="TIGR00754">
    <property type="entry name" value="bfr"/>
    <property type="match status" value="1"/>
</dbReference>
<dbReference type="PANTHER" id="PTHR30295">
    <property type="entry name" value="BACTERIOFERRITIN"/>
    <property type="match status" value="1"/>
</dbReference>
<dbReference type="PANTHER" id="PTHR30295:SF0">
    <property type="entry name" value="BACTERIOFERRITIN"/>
    <property type="match status" value="1"/>
</dbReference>
<dbReference type="Pfam" id="PF00210">
    <property type="entry name" value="Ferritin"/>
    <property type="match status" value="1"/>
</dbReference>
<dbReference type="PIRSF" id="PIRSF002560">
    <property type="entry name" value="Bacterioferritin"/>
    <property type="match status" value="1"/>
</dbReference>
<dbReference type="PRINTS" id="PR00601">
    <property type="entry name" value="BACFERRITIN"/>
</dbReference>
<dbReference type="SUPFAM" id="SSF47240">
    <property type="entry name" value="Ferritin-like"/>
    <property type="match status" value="1"/>
</dbReference>
<dbReference type="PROSITE" id="PS50905">
    <property type="entry name" value="FERRITIN_LIKE"/>
    <property type="match status" value="1"/>
</dbReference>
<comment type="function">
    <text evidence="3 7">Part of the iron-storage bacterioferritin (BFR) complex which stores about 50% of intracellular iron (PubMed:15247377). Missing most of the residues required for di-iron cluster formation, it probably does not have ferroxidase activity (Probable) (PubMed:15247377).</text>
</comment>
<comment type="cofactor">
    <cofactor evidence="6">
        <name>heme</name>
        <dbReference type="ChEBI" id="CHEBI:30413"/>
    </cofactor>
</comment>
<comment type="subunit">
    <text evidence="1">The bacterioferritin (BFR) complex is formed of 24 subunits (BfrA and BfrB) of unknown stoichiometry (PubMed:15247377). The BFR is arranged as 12 dimers that are packed together to form an approximately spherical molecule with a central cavity, in which large amounts of iron can be deposited (By similarity).</text>
</comment>
<comment type="subcellular location">
    <subcellularLocation>
        <location evidence="6">Cytoplasm</location>
    </subcellularLocation>
</comment>
<comment type="disruption phenotype">
    <text evidence="3 4">No visible growth phenotype in iron-sufficient conditions (30 uM Fe(NO(3)3)), in low iron conditions (no more than 36 nM) cells grow at half the rate of wild-type (PubMed:15247377). A double bfrA-bfrB deletion grows as well as the single gene deletions (PubMed:15247377). Even in iron-sufficient media both single and double gene deletions have lower photosystem I content (PSI, which contains 12 Fe atoms), store about 50% wild-type levels of iron, and undergo iron-stress (PubMed:15247377). In the presence or absence of iron a double bfrA-bfrB deletion shows no change in sensitivity to H(2)O(2), while a triple bfrA-bfrB-mrgA deletion is less sensitive than the single mgrA deletion (PubMed:19561120).</text>
</comment>
<comment type="similarity">
    <text evidence="6">Belongs to the bacterioferritin family.</text>
</comment>
<comment type="sequence caution" evidence="7">
    <conflict type="erroneous initiation">
        <sequence resource="EMBL-CDS" id="BAA17315"/>
    </conflict>
    <text>Extended N-terminus.</text>
</comment>
<sequence length="157" mass="18165">MEGNLEVRQHLNQALKLQLTAINQYFLHARMCKNWGLNALNQYEYKVSIKAMKQADSLIERVLFLEGLPNLQNLEKLLIGETVPEILGNDLTMNQGIRDGLVNSIAFFETQRDYVSRDVLSEILEETEEQIDWLESQQWLISNSGLENYLQSMMGEE</sequence>
<feature type="chain" id="PRO_0000460759" description="Bacterioferritin BfrB">
    <location>
        <begin position="1"/>
        <end position="157"/>
    </location>
</feature>
<feature type="domain" description="Ferritin-like diiron" evidence="2">
    <location>
        <begin position="1"/>
        <end position="145"/>
    </location>
</feature>
<feature type="binding site" description="axial binding residue" evidence="2">
    <location>
        <position position="52"/>
    </location>
    <ligand>
        <name>heme b</name>
        <dbReference type="ChEBI" id="CHEBI:60344"/>
        <note>ligand shared between dimeric partners</note>
    </ligand>
    <ligandPart>
        <name>Fe</name>
        <dbReference type="ChEBI" id="CHEBI:18248"/>
    </ligandPart>
</feature>
<name>BFRB_SYNY3</name>
<gene>
    <name evidence="5" type="primary">bfrB</name>
    <name type="ordered locus">slr1890</name>
</gene>
<reference evidence="8" key="1">
    <citation type="journal article" date="1996" name="DNA Res.">
        <title>Sequence analysis of the genome of the unicellular cyanobacterium Synechocystis sp. strain PCC6803. II. Sequence determination of the entire genome and assignment of potential protein-coding regions.</title>
        <authorList>
            <person name="Kaneko T."/>
            <person name="Sato S."/>
            <person name="Kotani H."/>
            <person name="Tanaka A."/>
            <person name="Asamizu E."/>
            <person name="Nakamura Y."/>
            <person name="Miyajima N."/>
            <person name="Hirosawa M."/>
            <person name="Sugiura M."/>
            <person name="Sasamoto S."/>
            <person name="Kimura T."/>
            <person name="Hosouchi T."/>
            <person name="Matsuno A."/>
            <person name="Muraki A."/>
            <person name="Nakazaki N."/>
            <person name="Naruo K."/>
            <person name="Okumura S."/>
            <person name="Shimpo S."/>
            <person name="Takeuchi C."/>
            <person name="Wada T."/>
            <person name="Watanabe A."/>
            <person name="Yamada M."/>
            <person name="Yasuda M."/>
            <person name="Tabata S."/>
        </authorList>
    </citation>
    <scope>NUCLEOTIDE SEQUENCE [LARGE SCALE GENOMIC DNA]</scope>
    <source>
        <strain>ATCC 27184 / PCC 6803 / Kazusa</strain>
    </source>
</reference>
<reference key="2">
    <citation type="journal article" date="2004" name="Plant Physiol.">
        <title>Critical roles of bacterioferritins in iron storage and proliferation of cyanobacteria.</title>
        <authorList>
            <person name="Keren N."/>
            <person name="Aurora R."/>
            <person name="Pakrasi H.B."/>
        </authorList>
    </citation>
    <scope>IDENTIFICATION BY MASS SPECTROMETRY</scope>
    <scope>FUNCTION</scope>
    <scope>SUBUNIT</scope>
    <scope>DISRUPTION PHENOTYPE</scope>
    <scope>MAY BE CATALYTICALLY INACTIVE</scope>
    <source>
        <strain>ATCC 27184 / PCC 6803 / Kazusa</strain>
    </source>
</reference>
<reference key="3">
    <citation type="journal article" date="2009" name="Plant Physiol.">
        <title>The mechanism of iron homeostasis in the unicellular cyanobacterium synechocystis sp. PCC 6803 and its relationship to oxidative stress.</title>
        <authorList>
            <person name="Shcolnick S."/>
            <person name="Summerfield T.C."/>
            <person name="Reytman L."/>
            <person name="Sherman L.A."/>
            <person name="Keren N."/>
        </authorList>
    </citation>
    <scope>DISRUPTION PHENOTYPE</scope>
    <source>
        <strain>ATCC 27184 / PCC 6803 / Kazusa</strain>
    </source>
</reference>
<accession>P73287</accession>
<evidence type="ECO:0000250" key="1">
    <source>
        <dbReference type="UniProtKB" id="Q9HY79"/>
    </source>
</evidence>
<evidence type="ECO:0000255" key="2">
    <source>
        <dbReference type="PROSITE-ProRule" id="PRU00085"/>
    </source>
</evidence>
<evidence type="ECO:0000269" key="3">
    <source>
    </source>
</evidence>
<evidence type="ECO:0000269" key="4">
    <source>
    </source>
</evidence>
<evidence type="ECO:0000303" key="5">
    <source>
    </source>
</evidence>
<evidence type="ECO:0000305" key="6"/>
<evidence type="ECO:0000305" key="7">
    <source>
    </source>
</evidence>
<evidence type="ECO:0000312" key="8">
    <source>
        <dbReference type="EMBL" id="BAA17315.1"/>
    </source>
</evidence>
<organism>
    <name type="scientific">Synechocystis sp. (strain ATCC 27184 / PCC 6803 / Kazusa)</name>
    <dbReference type="NCBI Taxonomy" id="1111708"/>
    <lineage>
        <taxon>Bacteria</taxon>
        <taxon>Bacillati</taxon>
        <taxon>Cyanobacteriota</taxon>
        <taxon>Cyanophyceae</taxon>
        <taxon>Synechococcales</taxon>
        <taxon>Merismopediaceae</taxon>
        <taxon>Synechocystis</taxon>
    </lineage>
</organism>